<comment type="function">
    <text evidence="1">Large subunit of the glutamine-dependent carbamoyl phosphate synthetase (CPSase). CPSase catalyzes the formation of carbamoyl phosphate from the ammonia moiety of glutamine, carbonate, and phosphate donated by ATP, constituting the first step of 2 biosynthetic pathways, one leading to arginine and/or urea and the other to pyrimidine nucleotides. The large subunit (synthetase) binds the substrates ammonia (free or transferred from glutamine from the small subunit), hydrogencarbonate and ATP and carries out an ATP-coupled ligase reaction, activating hydrogencarbonate by forming carboxy phosphate which reacts with ammonia to form carbamoyl phosphate.</text>
</comment>
<comment type="catalytic activity">
    <reaction evidence="1">
        <text>hydrogencarbonate + L-glutamine + 2 ATP + H2O = carbamoyl phosphate + L-glutamate + 2 ADP + phosphate + 2 H(+)</text>
        <dbReference type="Rhea" id="RHEA:18633"/>
        <dbReference type="ChEBI" id="CHEBI:15377"/>
        <dbReference type="ChEBI" id="CHEBI:15378"/>
        <dbReference type="ChEBI" id="CHEBI:17544"/>
        <dbReference type="ChEBI" id="CHEBI:29985"/>
        <dbReference type="ChEBI" id="CHEBI:30616"/>
        <dbReference type="ChEBI" id="CHEBI:43474"/>
        <dbReference type="ChEBI" id="CHEBI:58228"/>
        <dbReference type="ChEBI" id="CHEBI:58359"/>
        <dbReference type="ChEBI" id="CHEBI:456216"/>
        <dbReference type="EC" id="6.3.5.5"/>
    </reaction>
</comment>
<comment type="catalytic activity">
    <molecule>Carbamoyl phosphate synthase large chain</molecule>
    <reaction evidence="1">
        <text>hydrogencarbonate + NH4(+) + 2 ATP = carbamoyl phosphate + 2 ADP + phosphate + 2 H(+)</text>
        <dbReference type="Rhea" id="RHEA:18029"/>
        <dbReference type="ChEBI" id="CHEBI:15378"/>
        <dbReference type="ChEBI" id="CHEBI:17544"/>
        <dbReference type="ChEBI" id="CHEBI:28938"/>
        <dbReference type="ChEBI" id="CHEBI:30616"/>
        <dbReference type="ChEBI" id="CHEBI:43474"/>
        <dbReference type="ChEBI" id="CHEBI:58228"/>
        <dbReference type="ChEBI" id="CHEBI:456216"/>
        <dbReference type="EC" id="6.3.4.16"/>
    </reaction>
</comment>
<comment type="cofactor">
    <cofactor evidence="1">
        <name>Mg(2+)</name>
        <dbReference type="ChEBI" id="CHEBI:18420"/>
    </cofactor>
    <cofactor evidence="1">
        <name>Mn(2+)</name>
        <dbReference type="ChEBI" id="CHEBI:29035"/>
    </cofactor>
    <text evidence="1">Binds 4 Mg(2+) or Mn(2+) ions per subunit.</text>
</comment>
<comment type="pathway">
    <text evidence="1">Amino-acid biosynthesis; L-arginine biosynthesis; carbamoyl phosphate from bicarbonate: step 1/1.</text>
</comment>
<comment type="pathway">
    <text evidence="1">Pyrimidine metabolism; UMP biosynthesis via de novo pathway; (S)-dihydroorotate from bicarbonate: step 1/3.</text>
</comment>
<comment type="subunit">
    <text evidence="1">Composed of two chains; the small (or glutamine) chain promotes the hydrolysis of glutamine to ammonia, which is used by the large (or ammonia) chain to synthesize carbamoyl phosphate. Tetramer of heterodimers (alpha,beta)4.</text>
</comment>
<comment type="domain">
    <text evidence="1">The large subunit is composed of 2 ATP-grasp domains that are involved in binding the 2 ATP molecules needed for carbamoyl phosphate synthesis. The N-terminal ATP-grasp domain (referred to as the carboxyphosphate synthetic component) catalyzes the ATP-dependent phosphorylation of hydrogencarbonate to carboxyphosphate and the subsequent nucleophilic attack by ammonia to form a carbamate intermediate. The C-terminal ATP-grasp domain (referred to as the carbamoyl phosphate synthetic component) then catalyzes the phosphorylation of carbamate with the second ATP to form the end product carbamoyl phosphate. The reactive and unstable enzyme intermediates are sequentially channeled from one active site to the next through the interior of the protein over a distance of at least 96 A.</text>
</comment>
<comment type="similarity">
    <text evidence="1">Belongs to the CarB family.</text>
</comment>
<dbReference type="EC" id="6.3.4.16" evidence="1"/>
<dbReference type="EC" id="6.3.5.5" evidence="1"/>
<dbReference type="EMBL" id="AE017283">
    <property type="protein sequence ID" value="AAT82752.1"/>
    <property type="molecule type" value="Genomic_DNA"/>
</dbReference>
<dbReference type="RefSeq" id="WP_002531412.1">
    <property type="nucleotide sequence ID" value="NZ_CP025935.1"/>
</dbReference>
<dbReference type="SMR" id="Q6A914"/>
<dbReference type="EnsemblBacteria" id="AAT82752">
    <property type="protein sequence ID" value="AAT82752"/>
    <property type="gene ID" value="PPA1000"/>
</dbReference>
<dbReference type="KEGG" id="pac:PPA1000"/>
<dbReference type="PATRIC" id="fig|267747.3.peg.1035"/>
<dbReference type="eggNOG" id="COG0458">
    <property type="taxonomic scope" value="Bacteria"/>
</dbReference>
<dbReference type="HOGENOM" id="CLU_000513_1_0_11"/>
<dbReference type="UniPathway" id="UPA00068">
    <property type="reaction ID" value="UER00171"/>
</dbReference>
<dbReference type="UniPathway" id="UPA00070">
    <property type="reaction ID" value="UER00115"/>
</dbReference>
<dbReference type="Proteomes" id="UP000000603">
    <property type="component" value="Chromosome"/>
</dbReference>
<dbReference type="GO" id="GO:0005737">
    <property type="term" value="C:cytoplasm"/>
    <property type="evidence" value="ECO:0007669"/>
    <property type="project" value="TreeGrafter"/>
</dbReference>
<dbReference type="GO" id="GO:0005524">
    <property type="term" value="F:ATP binding"/>
    <property type="evidence" value="ECO:0007669"/>
    <property type="project" value="UniProtKB-UniRule"/>
</dbReference>
<dbReference type="GO" id="GO:0004087">
    <property type="term" value="F:carbamoyl-phosphate synthase (ammonia) activity"/>
    <property type="evidence" value="ECO:0007669"/>
    <property type="project" value="RHEA"/>
</dbReference>
<dbReference type="GO" id="GO:0004088">
    <property type="term" value="F:carbamoyl-phosphate synthase (glutamine-hydrolyzing) activity"/>
    <property type="evidence" value="ECO:0007669"/>
    <property type="project" value="UniProtKB-UniRule"/>
</dbReference>
<dbReference type="GO" id="GO:0046872">
    <property type="term" value="F:metal ion binding"/>
    <property type="evidence" value="ECO:0007669"/>
    <property type="project" value="UniProtKB-KW"/>
</dbReference>
<dbReference type="GO" id="GO:0044205">
    <property type="term" value="P:'de novo' UMP biosynthetic process"/>
    <property type="evidence" value="ECO:0007669"/>
    <property type="project" value="UniProtKB-UniRule"/>
</dbReference>
<dbReference type="GO" id="GO:0006541">
    <property type="term" value="P:glutamine metabolic process"/>
    <property type="evidence" value="ECO:0007669"/>
    <property type="project" value="TreeGrafter"/>
</dbReference>
<dbReference type="GO" id="GO:0006526">
    <property type="term" value="P:L-arginine biosynthetic process"/>
    <property type="evidence" value="ECO:0007669"/>
    <property type="project" value="UniProtKB-UniRule"/>
</dbReference>
<dbReference type="FunFam" id="1.10.1030.10:FF:000002">
    <property type="entry name" value="Carbamoyl-phosphate synthase large chain"/>
    <property type="match status" value="1"/>
</dbReference>
<dbReference type="FunFam" id="3.30.1490.20:FF:000001">
    <property type="entry name" value="Carbamoyl-phosphate synthase large chain"/>
    <property type="match status" value="1"/>
</dbReference>
<dbReference type="FunFam" id="3.30.470.20:FF:000001">
    <property type="entry name" value="Carbamoyl-phosphate synthase large chain"/>
    <property type="match status" value="1"/>
</dbReference>
<dbReference type="FunFam" id="3.30.470.20:FF:000026">
    <property type="entry name" value="Carbamoyl-phosphate synthase large chain"/>
    <property type="match status" value="1"/>
</dbReference>
<dbReference type="FunFam" id="3.40.50.20:FF:000001">
    <property type="entry name" value="Carbamoyl-phosphate synthase large chain"/>
    <property type="match status" value="2"/>
</dbReference>
<dbReference type="Gene3D" id="3.40.50.20">
    <property type="match status" value="2"/>
</dbReference>
<dbReference type="Gene3D" id="3.30.1490.20">
    <property type="entry name" value="ATP-grasp fold, A domain"/>
    <property type="match status" value="1"/>
</dbReference>
<dbReference type="Gene3D" id="3.30.470.20">
    <property type="entry name" value="ATP-grasp fold, B domain"/>
    <property type="match status" value="2"/>
</dbReference>
<dbReference type="Gene3D" id="1.10.1030.10">
    <property type="entry name" value="Carbamoyl-phosphate synthetase, large subunit oligomerisation domain"/>
    <property type="match status" value="1"/>
</dbReference>
<dbReference type="Gene3D" id="3.40.50.1380">
    <property type="entry name" value="Methylglyoxal synthase-like domain"/>
    <property type="match status" value="1"/>
</dbReference>
<dbReference type="HAMAP" id="MF_01210_A">
    <property type="entry name" value="CPSase_L_chain_A"/>
    <property type="match status" value="1"/>
</dbReference>
<dbReference type="HAMAP" id="MF_01210_B">
    <property type="entry name" value="CPSase_L_chain_B"/>
    <property type="match status" value="1"/>
</dbReference>
<dbReference type="InterPro" id="IPR011761">
    <property type="entry name" value="ATP-grasp"/>
</dbReference>
<dbReference type="InterPro" id="IPR013815">
    <property type="entry name" value="ATP_grasp_subdomain_1"/>
</dbReference>
<dbReference type="InterPro" id="IPR006275">
    <property type="entry name" value="CarbamoylP_synth_lsu"/>
</dbReference>
<dbReference type="InterPro" id="IPR005480">
    <property type="entry name" value="CarbamoylP_synth_lsu_oligo"/>
</dbReference>
<dbReference type="InterPro" id="IPR036897">
    <property type="entry name" value="CarbamoylP_synth_lsu_oligo_sf"/>
</dbReference>
<dbReference type="InterPro" id="IPR005479">
    <property type="entry name" value="CbamoylP_synth_lsu-like_ATP-bd"/>
</dbReference>
<dbReference type="InterPro" id="IPR005483">
    <property type="entry name" value="CbamoylP_synth_lsu_CPSase_dom"/>
</dbReference>
<dbReference type="InterPro" id="IPR011607">
    <property type="entry name" value="MGS-like_dom"/>
</dbReference>
<dbReference type="InterPro" id="IPR036914">
    <property type="entry name" value="MGS-like_dom_sf"/>
</dbReference>
<dbReference type="InterPro" id="IPR016185">
    <property type="entry name" value="PreATP-grasp_dom_sf"/>
</dbReference>
<dbReference type="NCBIfam" id="TIGR01369">
    <property type="entry name" value="CPSaseII_lrg"/>
    <property type="match status" value="1"/>
</dbReference>
<dbReference type="NCBIfam" id="NF003671">
    <property type="entry name" value="PRK05294.1"/>
    <property type="match status" value="1"/>
</dbReference>
<dbReference type="NCBIfam" id="NF009455">
    <property type="entry name" value="PRK12815.1"/>
    <property type="match status" value="1"/>
</dbReference>
<dbReference type="PANTHER" id="PTHR11405:SF53">
    <property type="entry name" value="CARBAMOYL-PHOSPHATE SYNTHASE [AMMONIA], MITOCHONDRIAL"/>
    <property type="match status" value="1"/>
</dbReference>
<dbReference type="PANTHER" id="PTHR11405">
    <property type="entry name" value="CARBAMOYLTRANSFERASE FAMILY MEMBER"/>
    <property type="match status" value="1"/>
</dbReference>
<dbReference type="Pfam" id="PF02786">
    <property type="entry name" value="CPSase_L_D2"/>
    <property type="match status" value="2"/>
</dbReference>
<dbReference type="Pfam" id="PF02787">
    <property type="entry name" value="CPSase_L_D3"/>
    <property type="match status" value="1"/>
</dbReference>
<dbReference type="Pfam" id="PF02142">
    <property type="entry name" value="MGS"/>
    <property type="match status" value="1"/>
</dbReference>
<dbReference type="PRINTS" id="PR00098">
    <property type="entry name" value="CPSASE"/>
</dbReference>
<dbReference type="SMART" id="SM01096">
    <property type="entry name" value="CPSase_L_D3"/>
    <property type="match status" value="1"/>
</dbReference>
<dbReference type="SMART" id="SM01209">
    <property type="entry name" value="GARS_A"/>
    <property type="match status" value="1"/>
</dbReference>
<dbReference type="SMART" id="SM00851">
    <property type="entry name" value="MGS"/>
    <property type="match status" value="1"/>
</dbReference>
<dbReference type="SUPFAM" id="SSF48108">
    <property type="entry name" value="Carbamoyl phosphate synthetase, large subunit connection domain"/>
    <property type="match status" value="1"/>
</dbReference>
<dbReference type="SUPFAM" id="SSF56059">
    <property type="entry name" value="Glutathione synthetase ATP-binding domain-like"/>
    <property type="match status" value="2"/>
</dbReference>
<dbReference type="SUPFAM" id="SSF52335">
    <property type="entry name" value="Methylglyoxal synthase-like"/>
    <property type="match status" value="1"/>
</dbReference>
<dbReference type="SUPFAM" id="SSF52440">
    <property type="entry name" value="PreATP-grasp domain"/>
    <property type="match status" value="2"/>
</dbReference>
<dbReference type="PROSITE" id="PS50975">
    <property type="entry name" value="ATP_GRASP"/>
    <property type="match status" value="2"/>
</dbReference>
<dbReference type="PROSITE" id="PS00866">
    <property type="entry name" value="CPSASE_1"/>
    <property type="match status" value="2"/>
</dbReference>
<dbReference type="PROSITE" id="PS00867">
    <property type="entry name" value="CPSASE_2"/>
    <property type="match status" value="2"/>
</dbReference>
<dbReference type="PROSITE" id="PS51855">
    <property type="entry name" value="MGS"/>
    <property type="match status" value="1"/>
</dbReference>
<feature type="chain" id="PRO_1000066376" description="Carbamoyl phosphate synthase large chain">
    <location>
        <begin position="1"/>
        <end position="1068"/>
    </location>
</feature>
<feature type="domain" description="ATP-grasp 1" evidence="1">
    <location>
        <begin position="133"/>
        <end position="327"/>
    </location>
</feature>
<feature type="domain" description="ATP-grasp 2" evidence="1">
    <location>
        <begin position="671"/>
        <end position="867"/>
    </location>
</feature>
<feature type="domain" description="MGS-like" evidence="1">
    <location>
        <begin position="936"/>
        <end position="1068"/>
    </location>
</feature>
<feature type="region of interest" description="Carboxyphosphate synthetic domain" evidence="1">
    <location>
        <begin position="1"/>
        <end position="401"/>
    </location>
</feature>
<feature type="region of interest" description="Oligomerization domain" evidence="1">
    <location>
        <begin position="402"/>
        <end position="546"/>
    </location>
</feature>
<feature type="region of interest" description="Carbamoyl phosphate synthetic domain" evidence="1">
    <location>
        <begin position="547"/>
        <end position="935"/>
    </location>
</feature>
<feature type="region of interest" description="Allosteric domain" evidence="1">
    <location>
        <begin position="936"/>
        <end position="1068"/>
    </location>
</feature>
<feature type="binding site" evidence="1">
    <location>
        <position position="129"/>
    </location>
    <ligand>
        <name>ATP</name>
        <dbReference type="ChEBI" id="CHEBI:30616"/>
        <label>1</label>
    </ligand>
</feature>
<feature type="binding site" evidence="1">
    <location>
        <position position="169"/>
    </location>
    <ligand>
        <name>ATP</name>
        <dbReference type="ChEBI" id="CHEBI:30616"/>
        <label>1</label>
    </ligand>
</feature>
<feature type="binding site" evidence="1">
    <location>
        <position position="175"/>
    </location>
    <ligand>
        <name>ATP</name>
        <dbReference type="ChEBI" id="CHEBI:30616"/>
        <label>1</label>
    </ligand>
</feature>
<feature type="binding site" evidence="1">
    <location>
        <position position="176"/>
    </location>
    <ligand>
        <name>ATP</name>
        <dbReference type="ChEBI" id="CHEBI:30616"/>
        <label>1</label>
    </ligand>
</feature>
<feature type="binding site" evidence="1">
    <location>
        <position position="208"/>
    </location>
    <ligand>
        <name>ATP</name>
        <dbReference type="ChEBI" id="CHEBI:30616"/>
        <label>1</label>
    </ligand>
</feature>
<feature type="binding site" evidence="1">
    <location>
        <position position="210"/>
    </location>
    <ligand>
        <name>ATP</name>
        <dbReference type="ChEBI" id="CHEBI:30616"/>
        <label>1</label>
    </ligand>
</feature>
<feature type="binding site" evidence="1">
    <location>
        <position position="215"/>
    </location>
    <ligand>
        <name>ATP</name>
        <dbReference type="ChEBI" id="CHEBI:30616"/>
        <label>1</label>
    </ligand>
</feature>
<feature type="binding site" evidence="1">
    <location>
        <position position="241"/>
    </location>
    <ligand>
        <name>ATP</name>
        <dbReference type="ChEBI" id="CHEBI:30616"/>
        <label>1</label>
    </ligand>
</feature>
<feature type="binding site" evidence="1">
    <location>
        <position position="242"/>
    </location>
    <ligand>
        <name>ATP</name>
        <dbReference type="ChEBI" id="CHEBI:30616"/>
        <label>1</label>
    </ligand>
</feature>
<feature type="binding site" evidence="1">
    <location>
        <position position="243"/>
    </location>
    <ligand>
        <name>ATP</name>
        <dbReference type="ChEBI" id="CHEBI:30616"/>
        <label>1</label>
    </ligand>
</feature>
<feature type="binding site" evidence="1">
    <location>
        <position position="284"/>
    </location>
    <ligand>
        <name>ATP</name>
        <dbReference type="ChEBI" id="CHEBI:30616"/>
        <label>1</label>
    </ligand>
</feature>
<feature type="binding site" evidence="1">
    <location>
        <position position="284"/>
    </location>
    <ligand>
        <name>Mg(2+)</name>
        <dbReference type="ChEBI" id="CHEBI:18420"/>
        <label>1</label>
    </ligand>
</feature>
<feature type="binding site" evidence="1">
    <location>
        <position position="284"/>
    </location>
    <ligand>
        <name>Mn(2+)</name>
        <dbReference type="ChEBI" id="CHEBI:29035"/>
        <label>1</label>
    </ligand>
</feature>
<feature type="binding site" evidence="1">
    <location>
        <position position="298"/>
    </location>
    <ligand>
        <name>ATP</name>
        <dbReference type="ChEBI" id="CHEBI:30616"/>
        <label>1</label>
    </ligand>
</feature>
<feature type="binding site" evidence="1">
    <location>
        <position position="298"/>
    </location>
    <ligand>
        <name>Mg(2+)</name>
        <dbReference type="ChEBI" id="CHEBI:18420"/>
        <label>1</label>
    </ligand>
</feature>
<feature type="binding site" evidence="1">
    <location>
        <position position="298"/>
    </location>
    <ligand>
        <name>Mg(2+)</name>
        <dbReference type="ChEBI" id="CHEBI:18420"/>
        <label>2</label>
    </ligand>
</feature>
<feature type="binding site" evidence="1">
    <location>
        <position position="298"/>
    </location>
    <ligand>
        <name>Mn(2+)</name>
        <dbReference type="ChEBI" id="CHEBI:29035"/>
        <label>1</label>
    </ligand>
</feature>
<feature type="binding site" evidence="1">
    <location>
        <position position="298"/>
    </location>
    <ligand>
        <name>Mn(2+)</name>
        <dbReference type="ChEBI" id="CHEBI:29035"/>
        <label>2</label>
    </ligand>
</feature>
<feature type="binding site" evidence="1">
    <location>
        <position position="300"/>
    </location>
    <ligand>
        <name>Mg(2+)</name>
        <dbReference type="ChEBI" id="CHEBI:18420"/>
        <label>2</label>
    </ligand>
</feature>
<feature type="binding site" evidence="1">
    <location>
        <position position="300"/>
    </location>
    <ligand>
        <name>Mn(2+)</name>
        <dbReference type="ChEBI" id="CHEBI:29035"/>
        <label>2</label>
    </ligand>
</feature>
<feature type="binding site" evidence="1">
    <location>
        <position position="707"/>
    </location>
    <ligand>
        <name>ATP</name>
        <dbReference type="ChEBI" id="CHEBI:30616"/>
        <label>2</label>
    </ligand>
</feature>
<feature type="binding site" evidence="1">
    <location>
        <position position="746"/>
    </location>
    <ligand>
        <name>ATP</name>
        <dbReference type="ChEBI" id="CHEBI:30616"/>
        <label>2</label>
    </ligand>
</feature>
<feature type="binding site" evidence="1">
    <location>
        <position position="748"/>
    </location>
    <ligand>
        <name>ATP</name>
        <dbReference type="ChEBI" id="CHEBI:30616"/>
        <label>2</label>
    </ligand>
</feature>
<feature type="binding site" evidence="1">
    <location>
        <position position="752"/>
    </location>
    <ligand>
        <name>ATP</name>
        <dbReference type="ChEBI" id="CHEBI:30616"/>
        <label>2</label>
    </ligand>
</feature>
<feature type="binding site" evidence="1">
    <location>
        <position position="777"/>
    </location>
    <ligand>
        <name>ATP</name>
        <dbReference type="ChEBI" id="CHEBI:30616"/>
        <label>2</label>
    </ligand>
</feature>
<feature type="binding site" evidence="1">
    <location>
        <position position="778"/>
    </location>
    <ligand>
        <name>ATP</name>
        <dbReference type="ChEBI" id="CHEBI:30616"/>
        <label>2</label>
    </ligand>
</feature>
<feature type="binding site" evidence="1">
    <location>
        <position position="779"/>
    </location>
    <ligand>
        <name>ATP</name>
        <dbReference type="ChEBI" id="CHEBI:30616"/>
        <label>2</label>
    </ligand>
</feature>
<feature type="binding site" evidence="1">
    <location>
        <position position="780"/>
    </location>
    <ligand>
        <name>ATP</name>
        <dbReference type="ChEBI" id="CHEBI:30616"/>
        <label>2</label>
    </ligand>
</feature>
<feature type="binding site" evidence="1">
    <location>
        <position position="820"/>
    </location>
    <ligand>
        <name>ATP</name>
        <dbReference type="ChEBI" id="CHEBI:30616"/>
        <label>2</label>
    </ligand>
</feature>
<feature type="binding site" evidence="1">
    <location>
        <position position="820"/>
    </location>
    <ligand>
        <name>Mg(2+)</name>
        <dbReference type="ChEBI" id="CHEBI:18420"/>
        <label>3</label>
    </ligand>
</feature>
<feature type="binding site" evidence="1">
    <location>
        <position position="820"/>
    </location>
    <ligand>
        <name>Mn(2+)</name>
        <dbReference type="ChEBI" id="CHEBI:29035"/>
        <label>3</label>
    </ligand>
</feature>
<feature type="binding site" evidence="1">
    <location>
        <position position="838"/>
    </location>
    <ligand>
        <name>ATP</name>
        <dbReference type="ChEBI" id="CHEBI:30616"/>
        <label>2</label>
    </ligand>
</feature>
<feature type="binding site" evidence="1">
    <location>
        <position position="838"/>
    </location>
    <ligand>
        <name>Mg(2+)</name>
        <dbReference type="ChEBI" id="CHEBI:18420"/>
        <label>3</label>
    </ligand>
</feature>
<feature type="binding site" evidence="1">
    <location>
        <position position="838"/>
    </location>
    <ligand>
        <name>Mg(2+)</name>
        <dbReference type="ChEBI" id="CHEBI:18420"/>
        <label>4</label>
    </ligand>
</feature>
<feature type="binding site" evidence="1">
    <location>
        <position position="838"/>
    </location>
    <ligand>
        <name>Mn(2+)</name>
        <dbReference type="ChEBI" id="CHEBI:29035"/>
        <label>3</label>
    </ligand>
</feature>
<feature type="binding site" evidence="1">
    <location>
        <position position="838"/>
    </location>
    <ligand>
        <name>Mn(2+)</name>
        <dbReference type="ChEBI" id="CHEBI:29035"/>
        <label>4</label>
    </ligand>
</feature>
<feature type="binding site" evidence="1">
    <location>
        <position position="840"/>
    </location>
    <ligand>
        <name>Mg(2+)</name>
        <dbReference type="ChEBI" id="CHEBI:18420"/>
        <label>4</label>
    </ligand>
</feature>
<feature type="binding site" evidence="1">
    <location>
        <position position="840"/>
    </location>
    <ligand>
        <name>Mn(2+)</name>
        <dbReference type="ChEBI" id="CHEBI:29035"/>
        <label>4</label>
    </ligand>
</feature>
<reference key="1">
    <citation type="journal article" date="2004" name="Science">
        <title>The complete genome sequence of Propionibacterium acnes, a commensal of human skin.</title>
        <authorList>
            <person name="Brueggemann H."/>
            <person name="Henne A."/>
            <person name="Hoster F."/>
            <person name="Liesegang H."/>
            <person name="Wiezer A."/>
            <person name="Strittmatter A."/>
            <person name="Hujer S."/>
            <person name="Duerre P."/>
            <person name="Gottschalk G."/>
        </authorList>
    </citation>
    <scope>NUCLEOTIDE SEQUENCE [LARGE SCALE GENOMIC DNA]</scope>
    <source>
        <strain>DSM 16379 / KPA171202</strain>
    </source>
</reference>
<keyword id="KW-0028">Amino-acid biosynthesis</keyword>
<keyword id="KW-0055">Arginine biosynthesis</keyword>
<keyword id="KW-0067">ATP-binding</keyword>
<keyword id="KW-0436">Ligase</keyword>
<keyword id="KW-0460">Magnesium</keyword>
<keyword id="KW-0464">Manganese</keyword>
<keyword id="KW-0479">Metal-binding</keyword>
<keyword id="KW-0547">Nucleotide-binding</keyword>
<keyword id="KW-0665">Pyrimidine biosynthesis</keyword>
<keyword id="KW-0677">Repeat</keyword>
<accession>Q6A914</accession>
<organism>
    <name type="scientific">Cutibacterium acnes (strain DSM 16379 / KPA171202)</name>
    <name type="common">Propionibacterium acnes</name>
    <dbReference type="NCBI Taxonomy" id="267747"/>
    <lineage>
        <taxon>Bacteria</taxon>
        <taxon>Bacillati</taxon>
        <taxon>Actinomycetota</taxon>
        <taxon>Actinomycetes</taxon>
        <taxon>Propionibacteriales</taxon>
        <taxon>Propionibacteriaceae</taxon>
        <taxon>Cutibacterium</taxon>
    </lineage>
</organism>
<gene>
    <name evidence="1" type="primary">carB</name>
    <name type="ordered locus">PPA1000</name>
</gene>
<proteinExistence type="inferred from homology"/>
<evidence type="ECO:0000255" key="1">
    <source>
        <dbReference type="HAMAP-Rule" id="MF_01210"/>
    </source>
</evidence>
<name>CARB_CUTAK</name>
<protein>
    <recommendedName>
        <fullName evidence="1">Carbamoyl phosphate synthase large chain</fullName>
        <ecNumber evidence="1">6.3.4.16</ecNumber>
        <ecNumber evidence="1">6.3.5.5</ecNumber>
    </recommendedName>
    <alternativeName>
        <fullName evidence="1">Carbamoyl phosphate synthetase ammonia chain</fullName>
    </alternativeName>
</protein>
<sequence>MPRRTDLHRILVIGSGPILIGQAAEFDYAGTQACLALKEEGYEVILVNSNPATIMTDRDVADKVYIEPITLEFVSSILRRERPDAIVPTLGGQTGLNMATELAKSGIPDELGIELLGTKLSAIEKAEDRDLFKQLMDELGQPVPASEVVHTVDEAVKVGNTIGYPLIVRPAYTLGGTGGGMCCDEAELVRIVGKGLELSPVTECLIEQSIAGFKEIEYEMMRDGADNTMVVCTMENFDPVGVHTGDSIVFAPTQTLTDVEHEMLRDASIEIVRTLGIEGGCNVQLALDPNSFQYYVIEVNPRVSRSSALASKATGYPIAKIAAKIAVGLTLDEIRNPVTGTTWSMFEPMLDYVVAKIPRWPFDKFAQADRRLGTQMKATGEVMALGRTIEESLLKAVRSLEIGVDHLALREVADLPDDILEERLLHARDDRLFCLTEAIRRGRTVQELHEQTRIDVFFLDKVAHILEIEERLRACPDDSEALWIAKRNGFSDPAIARIWGETPDDVRVRRVDNGIVPVYKMVDTCAGEFESSTPYFYSTYEMENESKKSQRPSVLVLGSGPIRIGQGIEFDYATVHSVKAIQAAGYEAIIMNSNPETVSTDFSISDKLYFEPLTFEDVMNVIDLEQPDGVIVQFGGQTAINLAGPLSAAGVPILGTQVADLDRAEDREGFESLLAELGIPQAPGGTARSSEEAFAVAEELGYPVLVRPSYVIGGRAMAIVTSAEELKRYMRDAVHASPDKPVLVDRYLNGLECEVDAICDGTDVLIPGIMEHIERAGVHSGDSMAVYPPQRMSQQVADRIIEVTTKLARGLKTKGILNIQFVVANDPATGEETVYVIEANPRASRTVPFLSKVTGVSMAEVATRIILGETLADLGLRPGLLPFSKRIHVKSPVFSFSKLDLVDSHLGPEMKSTGEVMGSDDTVEKALYKVFEAANLHVPEYGKILITVTDDAKPEALQLARRFDRIGFQLVGTMGTARFFDEGGLRIDVAEKIGSGEAGSTESVLDLISRNGCDAVINVMGNGQDTIIDGKQIRREAIARGIPLFTSLDTAAAICRVMESRVFSTESI</sequence>